<sequence length="149" mass="16604">MERTFLAIKPDGVQRGLVGEIIRRFETKGFTLVGLKFLQVSKELAEQHYGVHRERPFFPSLVEFITSGPVVAMVWEGDGVIASARKIIGATNPLTAEPGTIRGDFGINIGRNLIHGSDAPETAQKEVSLWFTDAELVNWQPHLTPWLHE</sequence>
<accession>Q8YRP2</accession>
<reference key="1">
    <citation type="journal article" date="2001" name="DNA Res.">
        <title>Complete genomic sequence of the filamentous nitrogen-fixing cyanobacterium Anabaena sp. strain PCC 7120.</title>
        <authorList>
            <person name="Kaneko T."/>
            <person name="Nakamura Y."/>
            <person name="Wolk C.P."/>
            <person name="Kuritz T."/>
            <person name="Sasamoto S."/>
            <person name="Watanabe A."/>
            <person name="Iriguchi M."/>
            <person name="Ishikawa A."/>
            <person name="Kawashima K."/>
            <person name="Kimura T."/>
            <person name="Kishida Y."/>
            <person name="Kohara M."/>
            <person name="Matsumoto M."/>
            <person name="Matsuno A."/>
            <person name="Muraki A."/>
            <person name="Nakazaki N."/>
            <person name="Shimpo S."/>
            <person name="Sugimoto M."/>
            <person name="Takazawa M."/>
            <person name="Yamada M."/>
            <person name="Yasuda M."/>
            <person name="Tabata S."/>
        </authorList>
    </citation>
    <scope>NUCLEOTIDE SEQUENCE [LARGE SCALE GENOMIC DNA]</scope>
    <source>
        <strain>PCC 7120 / SAG 25.82 / UTEX 2576</strain>
    </source>
</reference>
<feature type="chain" id="PRO_0000136935" description="Nucleoside diphosphate kinase">
    <location>
        <begin position="1"/>
        <end position="149"/>
    </location>
</feature>
<feature type="active site" description="Pros-phosphohistidine intermediate" evidence="1">
    <location>
        <position position="115"/>
    </location>
</feature>
<feature type="binding site" evidence="1">
    <location>
        <position position="9"/>
    </location>
    <ligand>
        <name>ATP</name>
        <dbReference type="ChEBI" id="CHEBI:30616"/>
    </ligand>
</feature>
<feature type="binding site" evidence="1">
    <location>
        <position position="57"/>
    </location>
    <ligand>
        <name>ATP</name>
        <dbReference type="ChEBI" id="CHEBI:30616"/>
    </ligand>
</feature>
<feature type="binding site" evidence="1">
    <location>
        <position position="85"/>
    </location>
    <ligand>
        <name>ATP</name>
        <dbReference type="ChEBI" id="CHEBI:30616"/>
    </ligand>
</feature>
<feature type="binding site" evidence="1">
    <location>
        <position position="91"/>
    </location>
    <ligand>
        <name>ATP</name>
        <dbReference type="ChEBI" id="CHEBI:30616"/>
    </ligand>
</feature>
<feature type="binding site" evidence="1">
    <location>
        <position position="102"/>
    </location>
    <ligand>
        <name>ATP</name>
        <dbReference type="ChEBI" id="CHEBI:30616"/>
    </ligand>
</feature>
<feature type="binding site" evidence="1">
    <location>
        <position position="112"/>
    </location>
    <ligand>
        <name>ATP</name>
        <dbReference type="ChEBI" id="CHEBI:30616"/>
    </ligand>
</feature>
<dbReference type="EC" id="2.7.4.6" evidence="1"/>
<dbReference type="EMBL" id="BA000019">
    <property type="protein sequence ID" value="BAB75101.1"/>
    <property type="status" value="ALT_INIT"/>
    <property type="molecule type" value="Genomic_DNA"/>
</dbReference>
<dbReference type="PIR" id="AC2231">
    <property type="entry name" value="AC2231"/>
</dbReference>
<dbReference type="RefSeq" id="WP_011320146.1">
    <property type="nucleotide sequence ID" value="NZ_RSCN01000015.1"/>
</dbReference>
<dbReference type="SMR" id="Q8YRP2"/>
<dbReference type="STRING" id="103690.gene:10495441"/>
<dbReference type="GeneID" id="58726210"/>
<dbReference type="KEGG" id="ana:alr3402"/>
<dbReference type="eggNOG" id="COG0105">
    <property type="taxonomic scope" value="Bacteria"/>
</dbReference>
<dbReference type="OrthoDB" id="9801161at2"/>
<dbReference type="Proteomes" id="UP000002483">
    <property type="component" value="Chromosome"/>
</dbReference>
<dbReference type="GO" id="GO:0005737">
    <property type="term" value="C:cytoplasm"/>
    <property type="evidence" value="ECO:0007669"/>
    <property type="project" value="UniProtKB-SubCell"/>
</dbReference>
<dbReference type="GO" id="GO:0005524">
    <property type="term" value="F:ATP binding"/>
    <property type="evidence" value="ECO:0007669"/>
    <property type="project" value="UniProtKB-UniRule"/>
</dbReference>
<dbReference type="GO" id="GO:0046872">
    <property type="term" value="F:metal ion binding"/>
    <property type="evidence" value="ECO:0007669"/>
    <property type="project" value="UniProtKB-KW"/>
</dbReference>
<dbReference type="GO" id="GO:0004550">
    <property type="term" value="F:nucleoside diphosphate kinase activity"/>
    <property type="evidence" value="ECO:0007669"/>
    <property type="project" value="UniProtKB-UniRule"/>
</dbReference>
<dbReference type="GO" id="GO:0006241">
    <property type="term" value="P:CTP biosynthetic process"/>
    <property type="evidence" value="ECO:0007669"/>
    <property type="project" value="UniProtKB-UniRule"/>
</dbReference>
<dbReference type="GO" id="GO:0006183">
    <property type="term" value="P:GTP biosynthetic process"/>
    <property type="evidence" value="ECO:0007669"/>
    <property type="project" value="UniProtKB-UniRule"/>
</dbReference>
<dbReference type="GO" id="GO:0006228">
    <property type="term" value="P:UTP biosynthetic process"/>
    <property type="evidence" value="ECO:0007669"/>
    <property type="project" value="UniProtKB-UniRule"/>
</dbReference>
<dbReference type="CDD" id="cd04413">
    <property type="entry name" value="NDPk_I"/>
    <property type="match status" value="1"/>
</dbReference>
<dbReference type="FunFam" id="3.30.70.141:FF:000002">
    <property type="entry name" value="Nucleoside diphosphate kinase"/>
    <property type="match status" value="1"/>
</dbReference>
<dbReference type="Gene3D" id="3.30.70.141">
    <property type="entry name" value="Nucleoside diphosphate kinase-like domain"/>
    <property type="match status" value="1"/>
</dbReference>
<dbReference type="HAMAP" id="MF_00451">
    <property type="entry name" value="NDP_kinase"/>
    <property type="match status" value="1"/>
</dbReference>
<dbReference type="InterPro" id="IPR034907">
    <property type="entry name" value="NDK-like_dom"/>
</dbReference>
<dbReference type="InterPro" id="IPR036850">
    <property type="entry name" value="NDK-like_dom_sf"/>
</dbReference>
<dbReference type="InterPro" id="IPR001564">
    <property type="entry name" value="Nucleoside_diP_kinase"/>
</dbReference>
<dbReference type="InterPro" id="IPR023005">
    <property type="entry name" value="Nucleoside_diP_kinase_AS"/>
</dbReference>
<dbReference type="NCBIfam" id="NF001908">
    <property type="entry name" value="PRK00668.1"/>
    <property type="match status" value="1"/>
</dbReference>
<dbReference type="PANTHER" id="PTHR11349">
    <property type="entry name" value="NUCLEOSIDE DIPHOSPHATE KINASE"/>
    <property type="match status" value="1"/>
</dbReference>
<dbReference type="Pfam" id="PF00334">
    <property type="entry name" value="NDK"/>
    <property type="match status" value="1"/>
</dbReference>
<dbReference type="PRINTS" id="PR01243">
    <property type="entry name" value="NUCDPKINASE"/>
</dbReference>
<dbReference type="SMART" id="SM00562">
    <property type="entry name" value="NDK"/>
    <property type="match status" value="1"/>
</dbReference>
<dbReference type="SUPFAM" id="SSF54919">
    <property type="entry name" value="Nucleoside diphosphate kinase, NDK"/>
    <property type="match status" value="1"/>
</dbReference>
<dbReference type="PROSITE" id="PS00469">
    <property type="entry name" value="NDPK"/>
    <property type="match status" value="1"/>
</dbReference>
<dbReference type="PROSITE" id="PS51374">
    <property type="entry name" value="NDPK_LIKE"/>
    <property type="match status" value="1"/>
</dbReference>
<gene>
    <name evidence="1" type="primary">ndk</name>
    <name type="ordered locus">alr3402</name>
</gene>
<keyword id="KW-0067">ATP-binding</keyword>
<keyword id="KW-0963">Cytoplasm</keyword>
<keyword id="KW-0418">Kinase</keyword>
<keyword id="KW-0460">Magnesium</keyword>
<keyword id="KW-0479">Metal-binding</keyword>
<keyword id="KW-0546">Nucleotide metabolism</keyword>
<keyword id="KW-0547">Nucleotide-binding</keyword>
<keyword id="KW-0597">Phosphoprotein</keyword>
<keyword id="KW-1185">Reference proteome</keyword>
<keyword id="KW-0808">Transferase</keyword>
<name>NDK_NOSS1</name>
<proteinExistence type="inferred from homology"/>
<evidence type="ECO:0000255" key="1">
    <source>
        <dbReference type="HAMAP-Rule" id="MF_00451"/>
    </source>
</evidence>
<evidence type="ECO:0000305" key="2"/>
<organism>
    <name type="scientific">Nostoc sp. (strain PCC 7120 / SAG 25.82 / UTEX 2576)</name>
    <dbReference type="NCBI Taxonomy" id="103690"/>
    <lineage>
        <taxon>Bacteria</taxon>
        <taxon>Bacillati</taxon>
        <taxon>Cyanobacteriota</taxon>
        <taxon>Cyanophyceae</taxon>
        <taxon>Nostocales</taxon>
        <taxon>Nostocaceae</taxon>
        <taxon>Nostoc</taxon>
    </lineage>
</organism>
<protein>
    <recommendedName>
        <fullName evidence="1">Nucleoside diphosphate kinase</fullName>
        <shortName evidence="1">NDK</shortName>
        <shortName evidence="1">NDP kinase</shortName>
        <ecNumber evidence="1">2.7.4.6</ecNumber>
    </recommendedName>
    <alternativeName>
        <fullName evidence="1">Nucleoside-2-P kinase</fullName>
    </alternativeName>
</protein>
<comment type="function">
    <text evidence="1">Major role in the synthesis of nucleoside triphosphates other than ATP. The ATP gamma phosphate is transferred to the NDP beta phosphate via a ping-pong mechanism, using a phosphorylated active-site intermediate.</text>
</comment>
<comment type="catalytic activity">
    <reaction evidence="1">
        <text>a 2'-deoxyribonucleoside 5'-diphosphate + ATP = a 2'-deoxyribonucleoside 5'-triphosphate + ADP</text>
        <dbReference type="Rhea" id="RHEA:44640"/>
        <dbReference type="ChEBI" id="CHEBI:30616"/>
        <dbReference type="ChEBI" id="CHEBI:61560"/>
        <dbReference type="ChEBI" id="CHEBI:73316"/>
        <dbReference type="ChEBI" id="CHEBI:456216"/>
        <dbReference type="EC" id="2.7.4.6"/>
    </reaction>
</comment>
<comment type="catalytic activity">
    <reaction evidence="1">
        <text>a ribonucleoside 5'-diphosphate + ATP = a ribonucleoside 5'-triphosphate + ADP</text>
        <dbReference type="Rhea" id="RHEA:18113"/>
        <dbReference type="ChEBI" id="CHEBI:30616"/>
        <dbReference type="ChEBI" id="CHEBI:57930"/>
        <dbReference type="ChEBI" id="CHEBI:61557"/>
        <dbReference type="ChEBI" id="CHEBI:456216"/>
        <dbReference type="EC" id="2.7.4.6"/>
    </reaction>
</comment>
<comment type="cofactor">
    <cofactor evidence="1">
        <name>Mg(2+)</name>
        <dbReference type="ChEBI" id="CHEBI:18420"/>
    </cofactor>
</comment>
<comment type="subunit">
    <text evidence="1">Homotetramer.</text>
</comment>
<comment type="subcellular location">
    <subcellularLocation>
        <location evidence="1">Cytoplasm</location>
    </subcellularLocation>
</comment>
<comment type="similarity">
    <text evidence="1 2">Belongs to the NDK family.</text>
</comment>
<comment type="sequence caution" evidence="2">
    <conflict type="erroneous initiation">
        <sequence resource="EMBL-CDS" id="BAB75101"/>
    </conflict>
</comment>